<gene>
    <name type="ORF">OsI_012692</name>
</gene>
<reference key="1">
    <citation type="journal article" date="2005" name="PLoS Biol.">
        <title>The genomes of Oryza sativa: a history of duplications.</title>
        <authorList>
            <person name="Yu J."/>
            <person name="Wang J."/>
            <person name="Lin W."/>
            <person name="Li S."/>
            <person name="Li H."/>
            <person name="Zhou J."/>
            <person name="Ni P."/>
            <person name="Dong W."/>
            <person name="Hu S."/>
            <person name="Zeng C."/>
            <person name="Zhang J."/>
            <person name="Zhang Y."/>
            <person name="Li R."/>
            <person name="Xu Z."/>
            <person name="Li S."/>
            <person name="Li X."/>
            <person name="Zheng H."/>
            <person name="Cong L."/>
            <person name="Lin L."/>
            <person name="Yin J."/>
            <person name="Geng J."/>
            <person name="Li G."/>
            <person name="Shi J."/>
            <person name="Liu J."/>
            <person name="Lv H."/>
            <person name="Li J."/>
            <person name="Wang J."/>
            <person name="Deng Y."/>
            <person name="Ran L."/>
            <person name="Shi X."/>
            <person name="Wang X."/>
            <person name="Wu Q."/>
            <person name="Li C."/>
            <person name="Ren X."/>
            <person name="Wang J."/>
            <person name="Wang X."/>
            <person name="Li D."/>
            <person name="Liu D."/>
            <person name="Zhang X."/>
            <person name="Ji Z."/>
            <person name="Zhao W."/>
            <person name="Sun Y."/>
            <person name="Zhang Z."/>
            <person name="Bao J."/>
            <person name="Han Y."/>
            <person name="Dong L."/>
            <person name="Ji J."/>
            <person name="Chen P."/>
            <person name="Wu S."/>
            <person name="Liu J."/>
            <person name="Xiao Y."/>
            <person name="Bu D."/>
            <person name="Tan J."/>
            <person name="Yang L."/>
            <person name="Ye C."/>
            <person name="Zhang J."/>
            <person name="Xu J."/>
            <person name="Zhou Y."/>
            <person name="Yu Y."/>
            <person name="Zhang B."/>
            <person name="Zhuang S."/>
            <person name="Wei H."/>
            <person name="Liu B."/>
            <person name="Lei M."/>
            <person name="Yu H."/>
            <person name="Li Y."/>
            <person name="Xu H."/>
            <person name="Wei S."/>
            <person name="He X."/>
            <person name="Fang L."/>
            <person name="Zhang Z."/>
            <person name="Zhang Y."/>
            <person name="Huang X."/>
            <person name="Su Z."/>
            <person name="Tong W."/>
            <person name="Li J."/>
            <person name="Tong Z."/>
            <person name="Li S."/>
            <person name="Ye J."/>
            <person name="Wang L."/>
            <person name="Fang L."/>
            <person name="Lei T."/>
            <person name="Chen C.-S."/>
            <person name="Chen H.-C."/>
            <person name="Xu Z."/>
            <person name="Li H."/>
            <person name="Huang H."/>
            <person name="Zhang F."/>
            <person name="Xu H."/>
            <person name="Li N."/>
            <person name="Zhao C."/>
            <person name="Li S."/>
            <person name="Dong L."/>
            <person name="Huang Y."/>
            <person name="Li L."/>
            <person name="Xi Y."/>
            <person name="Qi Q."/>
            <person name="Li W."/>
            <person name="Zhang B."/>
            <person name="Hu W."/>
            <person name="Zhang Y."/>
            <person name="Tian X."/>
            <person name="Jiao Y."/>
            <person name="Liang X."/>
            <person name="Jin J."/>
            <person name="Gao L."/>
            <person name="Zheng W."/>
            <person name="Hao B."/>
            <person name="Liu S.-M."/>
            <person name="Wang W."/>
            <person name="Yuan L."/>
            <person name="Cao M."/>
            <person name="McDermott J."/>
            <person name="Samudrala R."/>
            <person name="Wang J."/>
            <person name="Wong G.K.-S."/>
            <person name="Yang H."/>
        </authorList>
    </citation>
    <scope>NUCLEOTIDE SEQUENCE [LARGE SCALE GENOMIC DNA]</scope>
    <source>
        <strain>cv. 93-11</strain>
    </source>
</reference>
<organism>
    <name type="scientific">Oryza sativa subsp. indica</name>
    <name type="common">Rice</name>
    <dbReference type="NCBI Taxonomy" id="39946"/>
    <lineage>
        <taxon>Eukaryota</taxon>
        <taxon>Viridiplantae</taxon>
        <taxon>Streptophyta</taxon>
        <taxon>Embryophyta</taxon>
        <taxon>Tracheophyta</taxon>
        <taxon>Spermatophyta</taxon>
        <taxon>Magnoliopsida</taxon>
        <taxon>Liliopsida</taxon>
        <taxon>Poales</taxon>
        <taxon>Poaceae</taxon>
        <taxon>BOP clade</taxon>
        <taxon>Oryzoideae</taxon>
        <taxon>Oryzeae</taxon>
        <taxon>Oryzinae</taxon>
        <taxon>Oryza</taxon>
        <taxon>Oryza sativa</taxon>
    </lineage>
</organism>
<accession>A2XKU9</accession>
<proteinExistence type="inferred from homology"/>
<keyword id="KW-1185">Reference proteome</keyword>
<protein>
    <recommendedName>
        <fullName>Costars family protein</fullName>
    </recommendedName>
</protein>
<dbReference type="EMBL" id="CM000128">
    <property type="protein sequence ID" value="EAY91459.1"/>
    <property type="molecule type" value="Genomic_DNA"/>
</dbReference>
<dbReference type="SMR" id="A2XKU9"/>
<dbReference type="STRING" id="39946.A2XKU9"/>
<dbReference type="EnsemblPlants" id="BGIOSGA013362-TA">
    <property type="protein sequence ID" value="BGIOSGA013362-PA"/>
    <property type="gene ID" value="BGIOSGA013362"/>
</dbReference>
<dbReference type="EnsemblPlants" id="OsGoSa_03g0030300.01">
    <property type="protein sequence ID" value="OsGoSa_03g0030300.01"/>
    <property type="gene ID" value="OsGoSa_03g0030300"/>
</dbReference>
<dbReference type="EnsemblPlants" id="OsIR64_03g0029940.01">
    <property type="protein sequence ID" value="OsIR64_03g0029940.01"/>
    <property type="gene ID" value="OsIR64_03g0029940"/>
</dbReference>
<dbReference type="EnsemblPlants" id="OsKYG_03g0030330.01">
    <property type="protein sequence ID" value="OsKYG_03g0030330.01"/>
    <property type="gene ID" value="OsKYG_03g0030330"/>
</dbReference>
<dbReference type="EnsemblPlants" id="OsLaMu_03g0030070.01">
    <property type="protein sequence ID" value="OsLaMu_03g0030070.01"/>
    <property type="gene ID" value="OsLaMu_03g0030070"/>
</dbReference>
<dbReference type="EnsemblPlants" id="OsLima_03g0030260.01">
    <property type="protein sequence ID" value="OsLima_03g0030260.01"/>
    <property type="gene ID" value="OsLima_03g0030260"/>
</dbReference>
<dbReference type="EnsemblPlants" id="OsLiXu_03g0030100.01">
    <property type="protein sequence ID" value="OsLiXu_03g0030100.01"/>
    <property type="gene ID" value="OsLiXu_03g0030100"/>
</dbReference>
<dbReference type="EnsemblPlants" id="OsMH63_03G030310_01">
    <property type="protein sequence ID" value="OsMH63_03G030310_01"/>
    <property type="gene ID" value="OsMH63_03G030310"/>
</dbReference>
<dbReference type="EnsemblPlants" id="OsPr106_03g0030220.01">
    <property type="protein sequence ID" value="OsPr106_03g0030220.01"/>
    <property type="gene ID" value="OsPr106_03g0030220"/>
</dbReference>
<dbReference type="EnsemblPlants" id="OsZS97_03G030210_01">
    <property type="protein sequence ID" value="OsZS97_03G030210_01"/>
    <property type="gene ID" value="OsZS97_03G030210"/>
</dbReference>
<dbReference type="Gramene" id="BGIOSGA013362-TA">
    <property type="protein sequence ID" value="BGIOSGA013362-PA"/>
    <property type="gene ID" value="BGIOSGA013362"/>
</dbReference>
<dbReference type="Gramene" id="OsGoSa_03g0030300.01">
    <property type="protein sequence ID" value="OsGoSa_03g0030300.01"/>
    <property type="gene ID" value="OsGoSa_03g0030300"/>
</dbReference>
<dbReference type="Gramene" id="OsIR64_03g0029940.01">
    <property type="protein sequence ID" value="OsIR64_03g0029940.01"/>
    <property type="gene ID" value="OsIR64_03g0029940"/>
</dbReference>
<dbReference type="Gramene" id="OsKYG_03g0030330.01">
    <property type="protein sequence ID" value="OsKYG_03g0030330.01"/>
    <property type="gene ID" value="OsKYG_03g0030330"/>
</dbReference>
<dbReference type="Gramene" id="OsLaMu_03g0030070.01">
    <property type="protein sequence ID" value="OsLaMu_03g0030070.01"/>
    <property type="gene ID" value="OsLaMu_03g0030070"/>
</dbReference>
<dbReference type="Gramene" id="OsLima_03g0030260.01">
    <property type="protein sequence ID" value="OsLima_03g0030260.01"/>
    <property type="gene ID" value="OsLima_03g0030260"/>
</dbReference>
<dbReference type="Gramene" id="OsLiXu_03g0030100.01">
    <property type="protein sequence ID" value="OsLiXu_03g0030100.01"/>
    <property type="gene ID" value="OsLiXu_03g0030100"/>
</dbReference>
<dbReference type="Gramene" id="OsMH63_03G030310_01">
    <property type="protein sequence ID" value="OsMH63_03G030310_01"/>
    <property type="gene ID" value="OsMH63_03G030310"/>
</dbReference>
<dbReference type="Gramene" id="OsPr106_03g0030220.01">
    <property type="protein sequence ID" value="OsPr106_03g0030220.01"/>
    <property type="gene ID" value="OsPr106_03g0030220"/>
</dbReference>
<dbReference type="Gramene" id="OsZS97_03G030210_01">
    <property type="protein sequence ID" value="OsZS97_03G030210_01"/>
    <property type="gene ID" value="OsZS97_03G030210"/>
</dbReference>
<dbReference type="HOGENOM" id="CLU_173478_0_0_1"/>
<dbReference type="OMA" id="QRVHDNV"/>
<dbReference type="OrthoDB" id="9871914at2759"/>
<dbReference type="Proteomes" id="UP000007015">
    <property type="component" value="Chromosome 3"/>
</dbReference>
<dbReference type="GO" id="GO:0032970">
    <property type="term" value="P:regulation of actin filament-based process"/>
    <property type="evidence" value="ECO:0007669"/>
    <property type="project" value="TreeGrafter"/>
</dbReference>
<dbReference type="FunFam" id="1.10.10.1540:FF:000002">
    <property type="entry name" value="costars family protein ABRACL"/>
    <property type="match status" value="1"/>
</dbReference>
<dbReference type="Gene3D" id="1.10.10.1540">
    <property type="entry name" value="Costar domain"/>
    <property type="match status" value="1"/>
</dbReference>
<dbReference type="InterPro" id="IPR044302">
    <property type="entry name" value="Costars"/>
</dbReference>
<dbReference type="InterPro" id="IPR027817">
    <property type="entry name" value="Costars_dom"/>
</dbReference>
<dbReference type="InterPro" id="IPR038095">
    <property type="entry name" value="Costars_sf"/>
</dbReference>
<dbReference type="PANTHER" id="PTHR46334">
    <property type="entry name" value="COSTARS FAMILY PROTEIN ABRACL"/>
    <property type="match status" value="1"/>
</dbReference>
<dbReference type="PANTHER" id="PTHR46334:SF1">
    <property type="entry name" value="COSTARS FAMILY PROTEIN ABRACL"/>
    <property type="match status" value="1"/>
</dbReference>
<dbReference type="Pfam" id="PF14705">
    <property type="entry name" value="Costars"/>
    <property type="match status" value="1"/>
</dbReference>
<dbReference type="SMART" id="SM01283">
    <property type="entry name" value="Costars"/>
    <property type="match status" value="1"/>
</dbReference>
<evidence type="ECO:0000305" key="1"/>
<sequence>MNVEEEVGKLKEEIQRLGQKQPDGSYKVTFGVIFNDDRCANIFEALVGTLRAAKKRKIVKYDGELLLQGAHDNVEITLLPPPAVAAA</sequence>
<feature type="chain" id="PRO_0000365545" description="Costars family protein">
    <location>
        <begin position="1"/>
        <end position="87"/>
    </location>
</feature>
<name>COSA_ORYSI</name>
<comment type="similarity">
    <text evidence="1">Belongs to the costars family.</text>
</comment>